<organism>
    <name type="scientific">Cyanidioschyzon merolae (strain NIES-3377 / 10D)</name>
    <name type="common">Unicellular red alga</name>
    <dbReference type="NCBI Taxonomy" id="280699"/>
    <lineage>
        <taxon>Eukaryota</taxon>
        <taxon>Rhodophyta</taxon>
        <taxon>Bangiophyceae</taxon>
        <taxon>Cyanidiales</taxon>
        <taxon>Cyanidiaceae</taxon>
        <taxon>Cyanidioschyzon</taxon>
    </lineage>
</organism>
<geneLocation type="chloroplast"/>
<reference key="1">
    <citation type="journal article" date="2003" name="DNA Res.">
        <title>Complete sequence and analysis of the plastid genome of the unicellular red alga Cyanidioschyzon merolae.</title>
        <authorList>
            <person name="Ohta N."/>
            <person name="Matsuzaki M."/>
            <person name="Misumi O."/>
            <person name="Miyagishima S.-Y."/>
            <person name="Nozaki H."/>
            <person name="Tanaka K."/>
            <person name="Shin-i T."/>
            <person name="Kohara Y."/>
            <person name="Kuroiwa T."/>
        </authorList>
    </citation>
    <scope>NUCLEOTIDE SEQUENCE [LARGE SCALE GENOMIC DNA]</scope>
    <source>
        <strain>NIES-3377 / 10D</strain>
    </source>
</reference>
<sequence>MSTKINSLLEEIKSLTLLEAAELVKQMETTFGIDASAVATAAPAVQVETKKEEKTEFALVLSQVPADKKINVLKVVRTITGLGLKEAKELVDSVPKTLKEGLSASEAEQLKTQLTEAGAQVELK</sequence>
<keyword id="KW-0150">Chloroplast</keyword>
<keyword id="KW-0934">Plastid</keyword>
<keyword id="KW-1185">Reference proteome</keyword>
<keyword id="KW-0687">Ribonucleoprotein</keyword>
<keyword id="KW-0689">Ribosomal protein</keyword>
<comment type="function">
    <text evidence="1">Forms part of the ribosomal stalk which helps the ribosome interact with GTP-bound translation factors. Is thus essential for accurate translation.</text>
</comment>
<comment type="subunit">
    <text evidence="1">Homodimer. Part of the ribosomal stalk of the 50S ribosomal subunit. Forms a multimeric L10(L12)X complex, where L10 forms an elongated spine to which 2 to 4 L12 dimers bind in a sequential fashion. Binds GTP-bound translation factors.</text>
</comment>
<comment type="subcellular location">
    <subcellularLocation>
        <location>Plastid</location>
        <location>Chloroplast</location>
    </subcellularLocation>
</comment>
<comment type="similarity">
    <text evidence="1">Belongs to the bacterial ribosomal protein bL12 family.</text>
</comment>
<accession>Q85G10</accession>
<feature type="chain" id="PRO_0000157616" description="Large ribosomal subunit protein bL12c">
    <location>
        <begin position="1"/>
        <end position="124"/>
    </location>
</feature>
<dbReference type="EMBL" id="AB002583">
    <property type="protein sequence ID" value="BAC76181.1"/>
    <property type="molecule type" value="Genomic_DNA"/>
</dbReference>
<dbReference type="RefSeq" id="NP_849019.1">
    <property type="nucleotide sequence ID" value="NC_004799.1"/>
</dbReference>
<dbReference type="SMR" id="Q85G10"/>
<dbReference type="STRING" id="280699.Q85G10"/>
<dbReference type="EnsemblPlants" id="CMV104CT">
    <property type="protein sequence ID" value="CMV104CT"/>
    <property type="gene ID" value="CMV104C"/>
</dbReference>
<dbReference type="GeneID" id="844969"/>
<dbReference type="Gramene" id="CMV104CT">
    <property type="protein sequence ID" value="CMV104CT"/>
    <property type="gene ID" value="CMV104C"/>
</dbReference>
<dbReference type="KEGG" id="cme:CymeCp087"/>
<dbReference type="eggNOG" id="KOG1715">
    <property type="taxonomic scope" value="Eukaryota"/>
</dbReference>
<dbReference type="HOGENOM" id="CLU_086499_3_2_1"/>
<dbReference type="Proteomes" id="UP000007014">
    <property type="component" value="Chloroplast"/>
</dbReference>
<dbReference type="GO" id="GO:0009507">
    <property type="term" value="C:chloroplast"/>
    <property type="evidence" value="ECO:0007669"/>
    <property type="project" value="UniProtKB-SubCell"/>
</dbReference>
<dbReference type="GO" id="GO:0022625">
    <property type="term" value="C:cytosolic large ribosomal subunit"/>
    <property type="evidence" value="ECO:0007669"/>
    <property type="project" value="TreeGrafter"/>
</dbReference>
<dbReference type="GO" id="GO:0003729">
    <property type="term" value="F:mRNA binding"/>
    <property type="evidence" value="ECO:0007669"/>
    <property type="project" value="TreeGrafter"/>
</dbReference>
<dbReference type="GO" id="GO:0003735">
    <property type="term" value="F:structural constituent of ribosome"/>
    <property type="evidence" value="ECO:0007669"/>
    <property type="project" value="InterPro"/>
</dbReference>
<dbReference type="GO" id="GO:0006412">
    <property type="term" value="P:translation"/>
    <property type="evidence" value="ECO:0007669"/>
    <property type="project" value="UniProtKB-UniRule"/>
</dbReference>
<dbReference type="CDD" id="cd00387">
    <property type="entry name" value="Ribosomal_L7_L12"/>
    <property type="match status" value="1"/>
</dbReference>
<dbReference type="FunFam" id="3.30.1390.10:FF:000001">
    <property type="entry name" value="50S ribosomal protein L7/L12"/>
    <property type="match status" value="1"/>
</dbReference>
<dbReference type="Gene3D" id="3.30.1390.10">
    <property type="match status" value="1"/>
</dbReference>
<dbReference type="Gene3D" id="1.20.5.710">
    <property type="entry name" value="Single helix bin"/>
    <property type="match status" value="1"/>
</dbReference>
<dbReference type="HAMAP" id="MF_00368">
    <property type="entry name" value="Ribosomal_bL12"/>
    <property type="match status" value="1"/>
</dbReference>
<dbReference type="InterPro" id="IPR000206">
    <property type="entry name" value="Ribosomal_bL12"/>
</dbReference>
<dbReference type="InterPro" id="IPR013823">
    <property type="entry name" value="Ribosomal_bL12_C"/>
</dbReference>
<dbReference type="InterPro" id="IPR014719">
    <property type="entry name" value="Ribosomal_bL12_C/ClpS-like"/>
</dbReference>
<dbReference type="InterPro" id="IPR008932">
    <property type="entry name" value="Ribosomal_bL12_oligo"/>
</dbReference>
<dbReference type="InterPro" id="IPR036235">
    <property type="entry name" value="Ribosomal_bL12_oligo_N_sf"/>
</dbReference>
<dbReference type="NCBIfam" id="TIGR00855">
    <property type="entry name" value="L12"/>
    <property type="match status" value="1"/>
</dbReference>
<dbReference type="PANTHER" id="PTHR45987">
    <property type="entry name" value="39S RIBOSOMAL PROTEIN L12"/>
    <property type="match status" value="1"/>
</dbReference>
<dbReference type="PANTHER" id="PTHR45987:SF4">
    <property type="entry name" value="LARGE RIBOSOMAL SUBUNIT PROTEIN BL12M"/>
    <property type="match status" value="1"/>
</dbReference>
<dbReference type="Pfam" id="PF00542">
    <property type="entry name" value="Ribosomal_L12"/>
    <property type="match status" value="1"/>
</dbReference>
<dbReference type="Pfam" id="PF16320">
    <property type="entry name" value="Ribosomal_L12_N"/>
    <property type="match status" value="1"/>
</dbReference>
<dbReference type="SUPFAM" id="SSF54736">
    <property type="entry name" value="ClpS-like"/>
    <property type="match status" value="1"/>
</dbReference>
<dbReference type="SUPFAM" id="SSF48300">
    <property type="entry name" value="Ribosomal protein L7/12, oligomerisation (N-terminal) domain"/>
    <property type="match status" value="1"/>
</dbReference>
<name>RK12_CYAM1</name>
<gene>
    <name evidence="1" type="primary">rpl12</name>
</gene>
<proteinExistence type="inferred from homology"/>
<evidence type="ECO:0000255" key="1">
    <source>
        <dbReference type="HAMAP-Rule" id="MF_00368"/>
    </source>
</evidence>
<evidence type="ECO:0000305" key="2"/>
<protein>
    <recommendedName>
        <fullName evidence="1">Large ribosomal subunit protein bL12c</fullName>
    </recommendedName>
    <alternativeName>
        <fullName evidence="2">50S ribosomal protein L12, chloroplastic</fullName>
    </alternativeName>
</protein>